<protein>
    <recommendedName>
        <fullName evidence="1">ATP phosphoribosyltransferase regulatory subunit</fullName>
    </recommendedName>
</protein>
<organism>
    <name type="scientific">Bordetella parapertussis (strain 12822 / ATCC BAA-587 / NCTC 13253)</name>
    <dbReference type="NCBI Taxonomy" id="257311"/>
    <lineage>
        <taxon>Bacteria</taxon>
        <taxon>Pseudomonadati</taxon>
        <taxon>Pseudomonadota</taxon>
        <taxon>Betaproteobacteria</taxon>
        <taxon>Burkholderiales</taxon>
        <taxon>Alcaligenaceae</taxon>
        <taxon>Bordetella</taxon>
    </lineage>
</organism>
<accession>Q7W6Q6</accession>
<reference key="1">
    <citation type="journal article" date="2003" name="Nat. Genet.">
        <title>Comparative analysis of the genome sequences of Bordetella pertussis, Bordetella parapertussis and Bordetella bronchiseptica.</title>
        <authorList>
            <person name="Parkhill J."/>
            <person name="Sebaihia M."/>
            <person name="Preston A."/>
            <person name="Murphy L.D."/>
            <person name="Thomson N.R."/>
            <person name="Harris D.E."/>
            <person name="Holden M.T.G."/>
            <person name="Churcher C.M."/>
            <person name="Bentley S.D."/>
            <person name="Mungall K.L."/>
            <person name="Cerdeno-Tarraga A.-M."/>
            <person name="Temple L."/>
            <person name="James K.D."/>
            <person name="Harris B."/>
            <person name="Quail M.A."/>
            <person name="Achtman M."/>
            <person name="Atkin R."/>
            <person name="Baker S."/>
            <person name="Basham D."/>
            <person name="Bason N."/>
            <person name="Cherevach I."/>
            <person name="Chillingworth T."/>
            <person name="Collins M."/>
            <person name="Cronin A."/>
            <person name="Davis P."/>
            <person name="Doggett J."/>
            <person name="Feltwell T."/>
            <person name="Goble A."/>
            <person name="Hamlin N."/>
            <person name="Hauser H."/>
            <person name="Holroyd S."/>
            <person name="Jagels K."/>
            <person name="Leather S."/>
            <person name="Moule S."/>
            <person name="Norberczak H."/>
            <person name="O'Neil S."/>
            <person name="Ormond D."/>
            <person name="Price C."/>
            <person name="Rabbinowitsch E."/>
            <person name="Rutter S."/>
            <person name="Sanders M."/>
            <person name="Saunders D."/>
            <person name="Seeger K."/>
            <person name="Sharp S."/>
            <person name="Simmonds M."/>
            <person name="Skelton J."/>
            <person name="Squares R."/>
            <person name="Squares S."/>
            <person name="Stevens K."/>
            <person name="Unwin L."/>
            <person name="Whitehead S."/>
            <person name="Barrell B.G."/>
            <person name="Maskell D.J."/>
        </authorList>
    </citation>
    <scope>NUCLEOTIDE SEQUENCE [LARGE SCALE GENOMIC DNA]</scope>
    <source>
        <strain>12822 / ATCC BAA-587 / NCTC 13253</strain>
    </source>
</reference>
<keyword id="KW-0028">Amino-acid biosynthesis</keyword>
<keyword id="KW-0963">Cytoplasm</keyword>
<keyword id="KW-0368">Histidine biosynthesis</keyword>
<dbReference type="EMBL" id="BX640431">
    <property type="protein sequence ID" value="CAE38137.1"/>
    <property type="molecule type" value="Genomic_DNA"/>
</dbReference>
<dbReference type="RefSeq" id="WP_003810715.1">
    <property type="nucleotide sequence ID" value="NC_002928.3"/>
</dbReference>
<dbReference type="SMR" id="Q7W6Q6"/>
<dbReference type="GeneID" id="93204632"/>
<dbReference type="KEGG" id="bpa:BPP2845"/>
<dbReference type="HOGENOM" id="CLU_025113_0_1_4"/>
<dbReference type="UniPathway" id="UPA00031">
    <property type="reaction ID" value="UER00006"/>
</dbReference>
<dbReference type="Proteomes" id="UP000001421">
    <property type="component" value="Chromosome"/>
</dbReference>
<dbReference type="GO" id="GO:0005737">
    <property type="term" value="C:cytoplasm"/>
    <property type="evidence" value="ECO:0007669"/>
    <property type="project" value="UniProtKB-SubCell"/>
</dbReference>
<dbReference type="GO" id="GO:0004821">
    <property type="term" value="F:histidine-tRNA ligase activity"/>
    <property type="evidence" value="ECO:0007669"/>
    <property type="project" value="TreeGrafter"/>
</dbReference>
<dbReference type="GO" id="GO:0006427">
    <property type="term" value="P:histidyl-tRNA aminoacylation"/>
    <property type="evidence" value="ECO:0007669"/>
    <property type="project" value="TreeGrafter"/>
</dbReference>
<dbReference type="GO" id="GO:0000105">
    <property type="term" value="P:L-histidine biosynthetic process"/>
    <property type="evidence" value="ECO:0007669"/>
    <property type="project" value="UniProtKB-UniRule"/>
</dbReference>
<dbReference type="Gene3D" id="3.30.930.10">
    <property type="entry name" value="Bira Bifunctional Protein, Domain 2"/>
    <property type="match status" value="1"/>
</dbReference>
<dbReference type="HAMAP" id="MF_00125">
    <property type="entry name" value="HisZ"/>
    <property type="match status" value="1"/>
</dbReference>
<dbReference type="InterPro" id="IPR045864">
    <property type="entry name" value="aa-tRNA-synth_II/BPL/LPL"/>
</dbReference>
<dbReference type="InterPro" id="IPR041715">
    <property type="entry name" value="HisRS-like_core"/>
</dbReference>
<dbReference type="InterPro" id="IPR004516">
    <property type="entry name" value="HisRS/HisZ"/>
</dbReference>
<dbReference type="InterPro" id="IPR004517">
    <property type="entry name" value="HisZ"/>
</dbReference>
<dbReference type="NCBIfam" id="NF008935">
    <property type="entry name" value="PRK12292.1-1"/>
    <property type="match status" value="1"/>
</dbReference>
<dbReference type="NCBIfam" id="NF009086">
    <property type="entry name" value="PRK12421.1"/>
    <property type="match status" value="1"/>
</dbReference>
<dbReference type="PANTHER" id="PTHR43707:SF1">
    <property type="entry name" value="HISTIDINE--TRNA LIGASE, MITOCHONDRIAL-RELATED"/>
    <property type="match status" value="1"/>
</dbReference>
<dbReference type="PANTHER" id="PTHR43707">
    <property type="entry name" value="HISTIDYL-TRNA SYNTHETASE"/>
    <property type="match status" value="1"/>
</dbReference>
<dbReference type="Pfam" id="PF13393">
    <property type="entry name" value="tRNA-synt_His"/>
    <property type="match status" value="1"/>
</dbReference>
<dbReference type="PIRSF" id="PIRSF001549">
    <property type="entry name" value="His-tRNA_synth"/>
    <property type="match status" value="1"/>
</dbReference>
<dbReference type="SUPFAM" id="SSF55681">
    <property type="entry name" value="Class II aaRS and biotin synthetases"/>
    <property type="match status" value="1"/>
</dbReference>
<gene>
    <name evidence="1" type="primary">hisZ</name>
    <name type="ordered locus">BPP2845</name>
</gene>
<sequence>MGNWLLPEGLADVLPAEARRIEELRRELLDLYRTYGFELVAPPLVEYIDSLLSSTGSDLNLRTCKLVDQLSGRTLGVRADMTSQVTRIDAHLLNRAGVTRLCYCGSVLHARPADLLSSRELLQIGAEIYGHAGFEADLEIIQLVMDTLATAGVRNARLDLCHSGVMRAIFDADPQASRHAGDLCTLLREKDVPGLAELASRVDGLGEDTVRALQALATLYGGPEIIARARRELPAVPGMAQALDALQALVDAMPGVTLSVDLADVGGYGYHSGVTFAVYGEDWHDALVRGGRYDDVSRAFGRARPATGFSLDLRKLAAGLTPAEPARAVRAPWGQDPALTDAVRRLRRSGEIVVQVLPGHEQGLDEFVCDRELALQDGAWTVRTL</sequence>
<evidence type="ECO:0000255" key="1">
    <source>
        <dbReference type="HAMAP-Rule" id="MF_00125"/>
    </source>
</evidence>
<proteinExistence type="inferred from homology"/>
<feature type="chain" id="PRO_0000171028" description="ATP phosphoribosyltransferase regulatory subunit">
    <location>
        <begin position="1"/>
        <end position="385"/>
    </location>
</feature>
<comment type="function">
    <text evidence="1">Required for the first step of histidine biosynthesis. May allow the feedback regulation of ATP phosphoribosyltransferase activity by histidine.</text>
</comment>
<comment type="pathway">
    <text evidence="1">Amino-acid biosynthesis; L-histidine biosynthesis; L-histidine from 5-phospho-alpha-D-ribose 1-diphosphate: step 1/9.</text>
</comment>
<comment type="subunit">
    <text evidence="1">Heteromultimer composed of HisG and HisZ subunits.</text>
</comment>
<comment type="subcellular location">
    <subcellularLocation>
        <location evidence="1">Cytoplasm</location>
    </subcellularLocation>
</comment>
<comment type="miscellaneous">
    <text>This function is generally fulfilled by the C-terminal part of HisG, which is missing in some bacteria such as this one.</text>
</comment>
<comment type="similarity">
    <text evidence="1">Belongs to the class-II aminoacyl-tRNA synthetase family. HisZ subfamily.</text>
</comment>
<name>HISZ_BORPA</name>